<comment type="function">
    <text>Component of the Mediator complex, a coactivator involved in the regulated transcription of nearly all RNA polymerase II-dependent genes. Mediator functions as a bridge to convey information from gene-specific regulatory proteins to the basal RNA polymerase II transcription machinery. Mediator is recruited to promoters by direct interactions with regulatory proteins and serves as a scaffold for the assembly of a functional preinitiation complex with RNA polymerase II and the general transcription factors.</text>
</comment>
<comment type="subunit">
    <text evidence="2">Component of the Mediator complex.</text>
</comment>
<comment type="subcellular location">
    <subcellularLocation>
        <location evidence="1">Nucleus</location>
    </subcellularLocation>
</comment>
<comment type="similarity">
    <text evidence="3">Belongs to the Mediator complex subunit 19 family.</text>
</comment>
<accession>Q9Y7N2</accession>
<organism>
    <name type="scientific">Schizosaccharomyces pombe (strain 972 / ATCC 24843)</name>
    <name type="common">Fission yeast</name>
    <dbReference type="NCBI Taxonomy" id="284812"/>
    <lineage>
        <taxon>Eukaryota</taxon>
        <taxon>Fungi</taxon>
        <taxon>Dikarya</taxon>
        <taxon>Ascomycota</taxon>
        <taxon>Taphrinomycotina</taxon>
        <taxon>Schizosaccharomycetes</taxon>
        <taxon>Schizosaccharomycetales</taxon>
        <taxon>Schizosaccharomycetaceae</taxon>
        <taxon>Schizosaccharomyces</taxon>
    </lineage>
</organism>
<evidence type="ECO:0000250" key="1"/>
<evidence type="ECO:0000269" key="2">
    <source>
    </source>
</evidence>
<evidence type="ECO:0000305" key="3"/>
<evidence type="ECO:0007829" key="4">
    <source>
        <dbReference type="PDB" id="5N9J"/>
    </source>
</evidence>
<proteinExistence type="evidence at protein level"/>
<name>MED19_SCHPO</name>
<feature type="chain" id="PRO_0000096369" description="Mediator of RNA polymerase II transcription subunit 19">
    <location>
        <begin position="1"/>
        <end position="138"/>
    </location>
</feature>
<feature type="turn" evidence="4">
    <location>
        <begin position="8"/>
        <end position="11"/>
    </location>
</feature>
<feature type="helix" evidence="4">
    <location>
        <begin position="26"/>
        <end position="29"/>
    </location>
</feature>
<feature type="helix" evidence="4">
    <location>
        <begin position="33"/>
        <end position="39"/>
    </location>
</feature>
<feature type="strand" evidence="4">
    <location>
        <begin position="40"/>
        <end position="42"/>
    </location>
</feature>
<feature type="strand" evidence="4">
    <location>
        <begin position="53"/>
        <end position="55"/>
    </location>
</feature>
<feature type="helix" evidence="4">
    <location>
        <begin position="56"/>
        <end position="59"/>
    </location>
</feature>
<feature type="strand" evidence="4">
    <location>
        <begin position="62"/>
        <end position="64"/>
    </location>
</feature>
<feature type="helix" evidence="4">
    <location>
        <begin position="73"/>
        <end position="79"/>
    </location>
</feature>
<feature type="helix" evidence="4">
    <location>
        <begin position="90"/>
        <end position="97"/>
    </location>
</feature>
<feature type="helix" evidence="4">
    <location>
        <begin position="109"/>
        <end position="112"/>
    </location>
</feature>
<keyword id="KW-0002">3D-structure</keyword>
<keyword id="KW-0010">Activator</keyword>
<keyword id="KW-0539">Nucleus</keyword>
<keyword id="KW-1185">Reference proteome</keyword>
<keyword id="KW-0804">Transcription</keyword>
<keyword id="KW-0805">Transcription regulation</keyword>
<gene>
    <name type="primary">med19</name>
    <name type="synonym">rox3</name>
    <name type="ORF">SPCC1450.05c</name>
</gene>
<dbReference type="EMBL" id="CU329672">
    <property type="protein sequence ID" value="CAB40172.1"/>
    <property type="molecule type" value="Genomic_DNA"/>
</dbReference>
<dbReference type="PIR" id="T40987">
    <property type="entry name" value="T40987"/>
</dbReference>
<dbReference type="RefSeq" id="NP_588304.1">
    <property type="nucleotide sequence ID" value="NM_001023294.2"/>
</dbReference>
<dbReference type="PDB" id="5N9J">
    <property type="method" value="X-ray"/>
    <property type="resolution" value="3.40 A"/>
    <property type="chains" value="C=1-138"/>
</dbReference>
<dbReference type="PDBsum" id="5N9J"/>
<dbReference type="SMR" id="Q9Y7N2"/>
<dbReference type="BioGRID" id="275819">
    <property type="interactions" value="72"/>
</dbReference>
<dbReference type="FunCoup" id="Q9Y7N2">
    <property type="interactions" value="34"/>
</dbReference>
<dbReference type="IntAct" id="Q9Y7N2">
    <property type="interactions" value="1"/>
</dbReference>
<dbReference type="STRING" id="284812.Q9Y7N2"/>
<dbReference type="iPTMnet" id="Q9Y7N2"/>
<dbReference type="PaxDb" id="4896-SPCC1450.05c.1"/>
<dbReference type="EnsemblFungi" id="SPCC1450.05c.1">
    <property type="protein sequence ID" value="SPCC1450.05c.1:pep"/>
    <property type="gene ID" value="SPCC1450.05c"/>
</dbReference>
<dbReference type="GeneID" id="2539249"/>
<dbReference type="KEGG" id="spo:2539249"/>
<dbReference type="PomBase" id="SPCC1450.05c"/>
<dbReference type="VEuPathDB" id="FungiDB:SPCC1450.05c"/>
<dbReference type="eggNOG" id="ENOG502R765">
    <property type="taxonomic scope" value="Eukaryota"/>
</dbReference>
<dbReference type="HOGENOM" id="CLU_1856455_0_0_1"/>
<dbReference type="InParanoid" id="Q9Y7N2"/>
<dbReference type="OMA" id="MRGDDMS"/>
<dbReference type="PRO" id="PR:Q9Y7N2"/>
<dbReference type="Proteomes" id="UP000002485">
    <property type="component" value="Chromosome III"/>
</dbReference>
<dbReference type="GO" id="GO:0070847">
    <property type="term" value="C:core mediator complex"/>
    <property type="evidence" value="ECO:0000318"/>
    <property type="project" value="GO_Central"/>
</dbReference>
<dbReference type="GO" id="GO:0016592">
    <property type="term" value="C:mediator complex"/>
    <property type="evidence" value="ECO:0000314"/>
    <property type="project" value="PomBase"/>
</dbReference>
<dbReference type="GO" id="GO:0005634">
    <property type="term" value="C:nucleus"/>
    <property type="evidence" value="ECO:0007005"/>
    <property type="project" value="PomBase"/>
</dbReference>
<dbReference type="GO" id="GO:0003713">
    <property type="term" value="F:transcription coactivator activity"/>
    <property type="evidence" value="ECO:0000269"/>
    <property type="project" value="PomBase"/>
</dbReference>
<dbReference type="GO" id="GO:0003712">
    <property type="term" value="F:transcription coregulator activity"/>
    <property type="evidence" value="ECO:0000318"/>
    <property type="project" value="GO_Central"/>
</dbReference>
<dbReference type="GO" id="GO:0060261">
    <property type="term" value="P:positive regulation of transcription initiation by RNA polymerase II"/>
    <property type="evidence" value="ECO:0000269"/>
    <property type="project" value="PomBase"/>
</dbReference>
<dbReference type="GO" id="GO:0006357">
    <property type="term" value="P:regulation of transcription by RNA polymerase II"/>
    <property type="evidence" value="ECO:0000318"/>
    <property type="project" value="GO_Central"/>
</dbReference>
<dbReference type="GO" id="GO:0006367">
    <property type="term" value="P:transcription initiation at RNA polymerase II promoter"/>
    <property type="evidence" value="ECO:0000314"/>
    <property type="project" value="PomBase"/>
</dbReference>
<dbReference type="InterPro" id="IPR013942">
    <property type="entry name" value="Mediator_Med19_fun"/>
</dbReference>
<dbReference type="PANTHER" id="PTHR28270">
    <property type="entry name" value="MEDIATOR OF RNA POLYMERASE II TRANSCRIPTION SUBUNIT 19"/>
    <property type="match status" value="1"/>
</dbReference>
<dbReference type="PANTHER" id="PTHR28270:SF1">
    <property type="entry name" value="MEDIATOR OF RNA POLYMERASE II TRANSCRIPTION SUBUNIT 19"/>
    <property type="match status" value="1"/>
</dbReference>
<dbReference type="Pfam" id="PF08633">
    <property type="entry name" value="Rox3"/>
    <property type="match status" value="1"/>
</dbReference>
<sequence length="138" mass="15928">MAQAPEYHYVGSVDYQPTRPSAHQNLIELYGLTELAKKVGRVDEFGNKRKMRRSYKAYIQDLPGYNEILRDNTIKQWLTNPIREEVPIDIEFLHHVFSVEPGIIPGFNPKVFGLEDDVVMGNVSRDSSQPRSPSRRKK</sequence>
<protein>
    <recommendedName>
        <fullName>Mediator of RNA polymerase II transcription subunit 19</fullName>
    </recommendedName>
    <alternativeName>
        <fullName>Mediator complex subunit 19</fullName>
    </alternativeName>
    <alternativeName>
        <fullName>RNA polymerase II mediator complex protein rox3</fullName>
    </alternativeName>
</protein>
<reference key="1">
    <citation type="journal article" date="2002" name="Nature">
        <title>The genome sequence of Schizosaccharomyces pombe.</title>
        <authorList>
            <person name="Wood V."/>
            <person name="Gwilliam R."/>
            <person name="Rajandream M.A."/>
            <person name="Lyne M.H."/>
            <person name="Lyne R."/>
            <person name="Stewart A."/>
            <person name="Sgouros J.G."/>
            <person name="Peat N."/>
            <person name="Hayles J."/>
            <person name="Baker S.G."/>
            <person name="Basham D."/>
            <person name="Bowman S."/>
            <person name="Brooks K."/>
            <person name="Brown D."/>
            <person name="Brown S."/>
            <person name="Chillingworth T."/>
            <person name="Churcher C.M."/>
            <person name="Collins M."/>
            <person name="Connor R."/>
            <person name="Cronin A."/>
            <person name="Davis P."/>
            <person name="Feltwell T."/>
            <person name="Fraser A."/>
            <person name="Gentles S."/>
            <person name="Goble A."/>
            <person name="Hamlin N."/>
            <person name="Harris D.E."/>
            <person name="Hidalgo J."/>
            <person name="Hodgson G."/>
            <person name="Holroyd S."/>
            <person name="Hornsby T."/>
            <person name="Howarth S."/>
            <person name="Huckle E.J."/>
            <person name="Hunt S."/>
            <person name="Jagels K."/>
            <person name="James K.D."/>
            <person name="Jones L."/>
            <person name="Jones M."/>
            <person name="Leather S."/>
            <person name="McDonald S."/>
            <person name="McLean J."/>
            <person name="Mooney P."/>
            <person name="Moule S."/>
            <person name="Mungall K.L."/>
            <person name="Murphy L.D."/>
            <person name="Niblett D."/>
            <person name="Odell C."/>
            <person name="Oliver K."/>
            <person name="O'Neil S."/>
            <person name="Pearson D."/>
            <person name="Quail M.A."/>
            <person name="Rabbinowitsch E."/>
            <person name="Rutherford K.M."/>
            <person name="Rutter S."/>
            <person name="Saunders D."/>
            <person name="Seeger K."/>
            <person name="Sharp S."/>
            <person name="Skelton J."/>
            <person name="Simmonds M.N."/>
            <person name="Squares R."/>
            <person name="Squares S."/>
            <person name="Stevens K."/>
            <person name="Taylor K."/>
            <person name="Taylor R.G."/>
            <person name="Tivey A."/>
            <person name="Walsh S.V."/>
            <person name="Warren T."/>
            <person name="Whitehead S."/>
            <person name="Woodward J.R."/>
            <person name="Volckaert G."/>
            <person name="Aert R."/>
            <person name="Robben J."/>
            <person name="Grymonprez B."/>
            <person name="Weltjens I."/>
            <person name="Vanstreels E."/>
            <person name="Rieger M."/>
            <person name="Schaefer M."/>
            <person name="Mueller-Auer S."/>
            <person name="Gabel C."/>
            <person name="Fuchs M."/>
            <person name="Duesterhoeft A."/>
            <person name="Fritzc C."/>
            <person name="Holzer E."/>
            <person name="Moestl D."/>
            <person name="Hilbert H."/>
            <person name="Borzym K."/>
            <person name="Langer I."/>
            <person name="Beck A."/>
            <person name="Lehrach H."/>
            <person name="Reinhardt R."/>
            <person name="Pohl T.M."/>
            <person name="Eger P."/>
            <person name="Zimmermann W."/>
            <person name="Wedler H."/>
            <person name="Wambutt R."/>
            <person name="Purnelle B."/>
            <person name="Goffeau A."/>
            <person name="Cadieu E."/>
            <person name="Dreano S."/>
            <person name="Gloux S."/>
            <person name="Lelaure V."/>
            <person name="Mottier S."/>
            <person name="Galibert F."/>
            <person name="Aves S.J."/>
            <person name="Xiang Z."/>
            <person name="Hunt C."/>
            <person name="Moore K."/>
            <person name="Hurst S.M."/>
            <person name="Lucas M."/>
            <person name="Rochet M."/>
            <person name="Gaillardin C."/>
            <person name="Tallada V.A."/>
            <person name="Garzon A."/>
            <person name="Thode G."/>
            <person name="Daga R.R."/>
            <person name="Cruzado L."/>
            <person name="Jimenez J."/>
            <person name="Sanchez M."/>
            <person name="del Rey F."/>
            <person name="Benito J."/>
            <person name="Dominguez A."/>
            <person name="Revuelta J.L."/>
            <person name="Moreno S."/>
            <person name="Armstrong J."/>
            <person name="Forsburg S.L."/>
            <person name="Cerutti L."/>
            <person name="Lowe T."/>
            <person name="McCombie W.R."/>
            <person name="Paulsen I."/>
            <person name="Potashkin J."/>
            <person name="Shpakovski G.V."/>
            <person name="Ussery D."/>
            <person name="Barrell B.G."/>
            <person name="Nurse P."/>
        </authorList>
    </citation>
    <scope>NUCLEOTIDE SEQUENCE [LARGE SCALE GENOMIC DNA]</scope>
    <source>
        <strain>972 / ATCC 24843</strain>
    </source>
</reference>
<reference key="2">
    <citation type="journal article" date="2001" name="Proc. Natl. Acad. Sci. U.S.A.">
        <title>Analysis of Schizosaccharomyces pombe mediator reveals a set of essential subunits conserved between yeast and metazoan cells.</title>
        <authorList>
            <person name="Spaehr H."/>
            <person name="Samuelsen C.O."/>
            <person name="Baraznenok V."/>
            <person name="Ernest I."/>
            <person name="Huylebroeck D."/>
            <person name="Remacle J.E."/>
            <person name="Samuelsson T."/>
            <person name="Kieselbach T."/>
            <person name="Holmberg S."/>
            <person name="Gustafsson C.M."/>
        </authorList>
    </citation>
    <scope>IDENTIFICATION BY MASS SPECTROMETRY</scope>
    <scope>IDENTIFICATION IN THE MEDIATOR COMPLEX</scope>
</reference>